<gene>
    <name evidence="1" type="primary">rpiA</name>
    <name type="ordered locus">BT9727_2554</name>
</gene>
<dbReference type="EC" id="5.3.1.6" evidence="1"/>
<dbReference type="EMBL" id="AE017355">
    <property type="protein sequence ID" value="AAT61324.1"/>
    <property type="molecule type" value="Genomic_DNA"/>
</dbReference>
<dbReference type="RefSeq" id="WP_000364539.1">
    <property type="nucleotide sequence ID" value="NC_005957.1"/>
</dbReference>
<dbReference type="RefSeq" id="YP_036880.1">
    <property type="nucleotide sequence ID" value="NC_005957.1"/>
</dbReference>
<dbReference type="SMR" id="Q6HHU6"/>
<dbReference type="KEGG" id="btk:BT9727_2554"/>
<dbReference type="PATRIC" id="fig|281309.8.peg.2704"/>
<dbReference type="HOGENOM" id="CLU_056590_1_0_9"/>
<dbReference type="UniPathway" id="UPA00115">
    <property type="reaction ID" value="UER00412"/>
</dbReference>
<dbReference type="Proteomes" id="UP000001301">
    <property type="component" value="Chromosome"/>
</dbReference>
<dbReference type="GO" id="GO:0004751">
    <property type="term" value="F:ribose-5-phosphate isomerase activity"/>
    <property type="evidence" value="ECO:0007669"/>
    <property type="project" value="UniProtKB-UniRule"/>
</dbReference>
<dbReference type="GO" id="GO:0009052">
    <property type="term" value="P:pentose-phosphate shunt, non-oxidative branch"/>
    <property type="evidence" value="ECO:0007669"/>
    <property type="project" value="UniProtKB-UniRule"/>
</dbReference>
<dbReference type="CDD" id="cd01398">
    <property type="entry name" value="RPI_A"/>
    <property type="match status" value="1"/>
</dbReference>
<dbReference type="FunFam" id="3.40.50.1360:FF:000001">
    <property type="entry name" value="Ribose-5-phosphate isomerase A"/>
    <property type="match status" value="1"/>
</dbReference>
<dbReference type="Gene3D" id="3.30.70.260">
    <property type="match status" value="1"/>
</dbReference>
<dbReference type="Gene3D" id="3.40.50.1360">
    <property type="match status" value="1"/>
</dbReference>
<dbReference type="HAMAP" id="MF_00170">
    <property type="entry name" value="Rib_5P_isom_A"/>
    <property type="match status" value="1"/>
</dbReference>
<dbReference type="InterPro" id="IPR037171">
    <property type="entry name" value="NagB/RpiA_transferase-like"/>
</dbReference>
<dbReference type="InterPro" id="IPR050262">
    <property type="entry name" value="Ribose-5P_isomerase"/>
</dbReference>
<dbReference type="InterPro" id="IPR020672">
    <property type="entry name" value="Ribose5P_isomerase_typA_subgr"/>
</dbReference>
<dbReference type="InterPro" id="IPR004788">
    <property type="entry name" value="Ribose5P_isomerase_type_A"/>
</dbReference>
<dbReference type="NCBIfam" id="NF001924">
    <property type="entry name" value="PRK00702.1"/>
    <property type="match status" value="1"/>
</dbReference>
<dbReference type="NCBIfam" id="TIGR00021">
    <property type="entry name" value="rpiA"/>
    <property type="match status" value="1"/>
</dbReference>
<dbReference type="PANTHER" id="PTHR43748">
    <property type="entry name" value="RIBOSE-5-PHOSPHATE ISOMERASE 3, CHLOROPLASTIC-RELATED"/>
    <property type="match status" value="1"/>
</dbReference>
<dbReference type="PANTHER" id="PTHR43748:SF3">
    <property type="entry name" value="RIBOSE-5-PHOSPHATE ISOMERASE 3, CHLOROPLASTIC-RELATED"/>
    <property type="match status" value="1"/>
</dbReference>
<dbReference type="Pfam" id="PF06026">
    <property type="entry name" value="Rib_5-P_isom_A"/>
    <property type="match status" value="1"/>
</dbReference>
<dbReference type="SUPFAM" id="SSF75445">
    <property type="entry name" value="D-ribose-5-phosphate isomerase (RpiA), lid domain"/>
    <property type="match status" value="1"/>
</dbReference>
<dbReference type="SUPFAM" id="SSF100950">
    <property type="entry name" value="NagB/RpiA/CoA transferase-like"/>
    <property type="match status" value="1"/>
</dbReference>
<reference key="1">
    <citation type="journal article" date="2006" name="J. Bacteriol.">
        <title>Pathogenomic sequence analysis of Bacillus cereus and Bacillus thuringiensis isolates closely related to Bacillus anthracis.</title>
        <authorList>
            <person name="Han C.S."/>
            <person name="Xie G."/>
            <person name="Challacombe J.F."/>
            <person name="Altherr M.R."/>
            <person name="Bhotika S.S."/>
            <person name="Bruce D."/>
            <person name="Campbell C.S."/>
            <person name="Campbell M.L."/>
            <person name="Chen J."/>
            <person name="Chertkov O."/>
            <person name="Cleland C."/>
            <person name="Dimitrijevic M."/>
            <person name="Doggett N.A."/>
            <person name="Fawcett J.J."/>
            <person name="Glavina T."/>
            <person name="Goodwin L.A."/>
            <person name="Hill K.K."/>
            <person name="Hitchcock P."/>
            <person name="Jackson P.J."/>
            <person name="Keim P."/>
            <person name="Kewalramani A.R."/>
            <person name="Longmire J."/>
            <person name="Lucas S."/>
            <person name="Malfatti S."/>
            <person name="McMurry K."/>
            <person name="Meincke L.J."/>
            <person name="Misra M."/>
            <person name="Moseman B.L."/>
            <person name="Mundt M."/>
            <person name="Munk A.C."/>
            <person name="Okinaka R.T."/>
            <person name="Parson-Quintana B."/>
            <person name="Reilly L.P."/>
            <person name="Richardson P."/>
            <person name="Robinson D.L."/>
            <person name="Rubin E."/>
            <person name="Saunders E."/>
            <person name="Tapia R."/>
            <person name="Tesmer J.G."/>
            <person name="Thayer N."/>
            <person name="Thompson L.S."/>
            <person name="Tice H."/>
            <person name="Ticknor L.O."/>
            <person name="Wills P.L."/>
            <person name="Brettin T.S."/>
            <person name="Gilna P."/>
        </authorList>
    </citation>
    <scope>NUCLEOTIDE SEQUENCE [LARGE SCALE GENOMIC DNA]</scope>
    <source>
        <strain>97-27</strain>
    </source>
</reference>
<protein>
    <recommendedName>
        <fullName evidence="1">Ribose-5-phosphate isomerase A</fullName>
        <ecNumber evidence="1">5.3.1.6</ecNumber>
    </recommendedName>
    <alternativeName>
        <fullName evidence="1">Phosphoriboisomerase A</fullName>
        <shortName evidence="1">PRI</shortName>
    </alternativeName>
</protein>
<evidence type="ECO:0000255" key="1">
    <source>
        <dbReference type="HAMAP-Rule" id="MF_00170"/>
    </source>
</evidence>
<accession>Q6HHU6</accession>
<feature type="chain" id="PRO_0000158386" description="Ribose-5-phosphate isomerase A">
    <location>
        <begin position="1"/>
        <end position="220"/>
    </location>
</feature>
<feature type="active site" description="Proton acceptor" evidence="1">
    <location>
        <position position="102"/>
    </location>
</feature>
<feature type="binding site" evidence="1">
    <location>
        <begin position="25"/>
        <end position="28"/>
    </location>
    <ligand>
        <name>substrate</name>
    </ligand>
</feature>
<feature type="binding site" evidence="1">
    <location>
        <begin position="80"/>
        <end position="83"/>
    </location>
    <ligand>
        <name>substrate</name>
    </ligand>
</feature>
<feature type="binding site" evidence="1">
    <location>
        <begin position="93"/>
        <end position="96"/>
    </location>
    <ligand>
        <name>substrate</name>
    </ligand>
</feature>
<feature type="binding site" evidence="1">
    <location>
        <position position="120"/>
    </location>
    <ligand>
        <name>substrate</name>
    </ligand>
</feature>
<sequence>MDLKQIAGEYAATFVKDGMKVGLGTGSTAYWTIQKLGQRVKEGLSIQAVPTSKETEALAQQLNIPLISLNDVQSLDLTIDGADEIDSNLQLIKGGGGALLREKIVASSSKELIIIVDESKVVTRLGTFPLPIEIIPFAWKQTESKIQSLGCQTTLRLKNNETFITDNNNMIVDCIFPNHIPTPSDLHKRLKMITGVVETGLFVNMTSKAIIGTKNGIQEL</sequence>
<keyword id="KW-0413">Isomerase</keyword>
<organism>
    <name type="scientific">Bacillus thuringiensis subsp. konkukian (strain 97-27)</name>
    <dbReference type="NCBI Taxonomy" id="281309"/>
    <lineage>
        <taxon>Bacteria</taxon>
        <taxon>Bacillati</taxon>
        <taxon>Bacillota</taxon>
        <taxon>Bacilli</taxon>
        <taxon>Bacillales</taxon>
        <taxon>Bacillaceae</taxon>
        <taxon>Bacillus</taxon>
        <taxon>Bacillus cereus group</taxon>
    </lineage>
</organism>
<comment type="function">
    <text evidence="1">Catalyzes the reversible conversion of ribose-5-phosphate to ribulose 5-phosphate.</text>
</comment>
<comment type="catalytic activity">
    <reaction evidence="1">
        <text>aldehydo-D-ribose 5-phosphate = D-ribulose 5-phosphate</text>
        <dbReference type="Rhea" id="RHEA:14657"/>
        <dbReference type="ChEBI" id="CHEBI:58121"/>
        <dbReference type="ChEBI" id="CHEBI:58273"/>
        <dbReference type="EC" id="5.3.1.6"/>
    </reaction>
</comment>
<comment type="pathway">
    <text evidence="1">Carbohydrate degradation; pentose phosphate pathway; D-ribose 5-phosphate from D-ribulose 5-phosphate (non-oxidative stage): step 1/1.</text>
</comment>
<comment type="subunit">
    <text evidence="1">Homodimer.</text>
</comment>
<comment type="similarity">
    <text evidence="1">Belongs to the ribose 5-phosphate isomerase family.</text>
</comment>
<name>RPIA_BACHK</name>
<proteinExistence type="inferred from homology"/>